<evidence type="ECO:0000250" key="1"/>
<evidence type="ECO:0000255" key="2">
    <source>
        <dbReference type="PROSITE-ProRule" id="PRU00214"/>
    </source>
</evidence>
<evidence type="ECO:0000256" key="3">
    <source>
        <dbReference type="SAM" id="MobiDB-lite"/>
    </source>
</evidence>
<evidence type="ECO:0000305" key="4"/>
<accession>Q9FKC6</accession>
<keyword id="KW-0963">Cytoplasm</keyword>
<keyword id="KW-1017">Isopeptide bond</keyword>
<keyword id="KW-0539">Nucleus</keyword>
<keyword id="KW-1185">Reference proteome</keyword>
<keyword id="KW-0833">Ubl conjugation pathway</keyword>
<organism>
    <name type="scientific">Arabidopsis thaliana</name>
    <name type="common">Mouse-ear cress</name>
    <dbReference type="NCBI Taxonomy" id="3702"/>
    <lineage>
        <taxon>Eukaryota</taxon>
        <taxon>Viridiplantae</taxon>
        <taxon>Streptophyta</taxon>
        <taxon>Embryophyta</taxon>
        <taxon>Tracheophyta</taxon>
        <taxon>Spermatophyta</taxon>
        <taxon>Magnoliopsida</taxon>
        <taxon>eudicotyledons</taxon>
        <taxon>Gunneridae</taxon>
        <taxon>Pentapetalae</taxon>
        <taxon>rosids</taxon>
        <taxon>malvids</taxon>
        <taxon>Brassicales</taxon>
        <taxon>Brassicaceae</taxon>
        <taxon>Camelineae</taxon>
        <taxon>Arabidopsis</taxon>
    </lineage>
</organism>
<name>SUMO6_ARATH</name>
<dbReference type="EMBL" id="AB012242">
    <property type="protein sequence ID" value="BAB09423.1"/>
    <property type="molecule type" value="Genomic_DNA"/>
</dbReference>
<dbReference type="EMBL" id="CP002688">
    <property type="protein sequence ID" value="AED95713.1"/>
    <property type="molecule type" value="Genomic_DNA"/>
</dbReference>
<dbReference type="RefSeq" id="NP_199681.1">
    <property type="nucleotide sequence ID" value="NM_124247.1"/>
</dbReference>
<dbReference type="SMR" id="Q9FKC6"/>
<dbReference type="STRING" id="3702.Q9FKC6"/>
<dbReference type="PaxDb" id="3702-AT5G48700.1"/>
<dbReference type="EnsemblPlants" id="AT5G48700.1">
    <property type="protein sequence ID" value="AT5G48700.1"/>
    <property type="gene ID" value="AT5G48700"/>
</dbReference>
<dbReference type="GeneID" id="834928"/>
<dbReference type="Gramene" id="AT5G48700.1">
    <property type="protein sequence ID" value="AT5G48700.1"/>
    <property type="gene ID" value="AT5G48700"/>
</dbReference>
<dbReference type="KEGG" id="ath:AT5G48700"/>
<dbReference type="Araport" id="AT5G48700"/>
<dbReference type="TAIR" id="AT5G48700">
    <property type="gene designation" value="SUMO4"/>
</dbReference>
<dbReference type="eggNOG" id="KOG1769">
    <property type="taxonomic scope" value="Eukaryota"/>
</dbReference>
<dbReference type="HOGENOM" id="CLU_148322_4_0_1"/>
<dbReference type="InParanoid" id="Q9FKC6"/>
<dbReference type="OrthoDB" id="442921at2759"/>
<dbReference type="PhylomeDB" id="Q9FKC6"/>
<dbReference type="PRO" id="PR:Q9FKC6"/>
<dbReference type="Proteomes" id="UP000006548">
    <property type="component" value="Chromosome 5"/>
</dbReference>
<dbReference type="ExpressionAtlas" id="Q9FKC6">
    <property type="expression patterns" value="baseline"/>
</dbReference>
<dbReference type="GO" id="GO:0005737">
    <property type="term" value="C:cytoplasm"/>
    <property type="evidence" value="ECO:0007669"/>
    <property type="project" value="UniProtKB-SubCell"/>
</dbReference>
<dbReference type="GO" id="GO:0005634">
    <property type="term" value="C:nucleus"/>
    <property type="evidence" value="ECO:0007669"/>
    <property type="project" value="UniProtKB-SubCell"/>
</dbReference>
<dbReference type="CDD" id="cd01763">
    <property type="entry name" value="Ubl_SUMO_like"/>
    <property type="match status" value="1"/>
</dbReference>
<dbReference type="FunFam" id="3.10.20.90:FF:000572">
    <property type="entry name" value="Putative small ubiquitin-related modifier 6"/>
    <property type="match status" value="1"/>
</dbReference>
<dbReference type="Gene3D" id="3.10.20.90">
    <property type="entry name" value="Phosphatidylinositol 3-kinase Catalytic Subunit, Chain A, domain 1"/>
    <property type="match status" value="1"/>
</dbReference>
<dbReference type="InterPro" id="IPR022617">
    <property type="entry name" value="Rad60/SUMO-like_dom"/>
</dbReference>
<dbReference type="InterPro" id="IPR000626">
    <property type="entry name" value="Ubiquitin-like_dom"/>
</dbReference>
<dbReference type="InterPro" id="IPR029071">
    <property type="entry name" value="Ubiquitin-like_domsf"/>
</dbReference>
<dbReference type="PANTHER" id="PTHR10562">
    <property type="entry name" value="SMALL UBIQUITIN-RELATED MODIFIER"/>
    <property type="match status" value="1"/>
</dbReference>
<dbReference type="Pfam" id="PF11976">
    <property type="entry name" value="Rad60-SLD"/>
    <property type="match status" value="1"/>
</dbReference>
<dbReference type="SUPFAM" id="SSF54236">
    <property type="entry name" value="Ubiquitin-like"/>
    <property type="match status" value="1"/>
</dbReference>
<dbReference type="PROSITE" id="PS50053">
    <property type="entry name" value="UBIQUITIN_2"/>
    <property type="match status" value="1"/>
</dbReference>
<proteinExistence type="evidence at protein level"/>
<sequence>MSTKSSSIHGRNEVKMEGEKRKDVESESTHVTLNVKGQDEEGVKVFRVRRKARLLKLMEYYAKMRGIEWNTFRFLSDDGSRIREYHTADDMELKDGDQIDALLPQESGFGPSTVFRV</sequence>
<protein>
    <recommendedName>
        <fullName>Putative small ubiquitin-related modifier 6</fullName>
        <shortName>AtSUMO6</shortName>
    </recommendedName>
</protein>
<feature type="chain" id="PRO_0000397037" description="Putative small ubiquitin-related modifier 6">
    <location>
        <begin position="1"/>
        <end position="117"/>
    </location>
</feature>
<feature type="domain" description="Ubiquitin-like" evidence="2">
    <location>
        <begin position="31"/>
        <end position="108"/>
    </location>
</feature>
<feature type="region of interest" description="Disordered" evidence="3">
    <location>
        <begin position="1"/>
        <end position="30"/>
    </location>
</feature>
<feature type="compositionally biased region" description="Basic and acidic residues" evidence="3">
    <location>
        <begin position="10"/>
        <end position="28"/>
    </location>
</feature>
<feature type="cross-link" description="Glycyl lysine isopeptide (Gly-Lys) (interchain with K-? in acceptor proteins)">
    <location>
        <position position="108"/>
    </location>
</feature>
<gene>
    <name type="primary">SUMO6</name>
    <name type="synonym">SUM6</name>
    <name type="ordered locus">At5g48700</name>
    <name type="ORF">K24G6.3</name>
</gene>
<reference key="1">
    <citation type="journal article" date="1998" name="DNA Res.">
        <title>Structural analysis of Arabidopsis thaliana chromosome 5. VI. Sequence features of the regions of 1,367,185 bp covered by 19 physically assigned P1 and TAC clones.</title>
        <authorList>
            <person name="Kotani H."/>
            <person name="Nakamura Y."/>
            <person name="Sato S."/>
            <person name="Asamizu E."/>
            <person name="Kaneko T."/>
            <person name="Miyajima N."/>
            <person name="Tabata S."/>
        </authorList>
    </citation>
    <scope>NUCLEOTIDE SEQUENCE [LARGE SCALE GENOMIC DNA]</scope>
    <source>
        <strain>cv. Columbia</strain>
    </source>
</reference>
<reference key="2">
    <citation type="journal article" date="2017" name="Plant J.">
        <title>Araport11: a complete reannotation of the Arabidopsis thaliana reference genome.</title>
        <authorList>
            <person name="Cheng C.Y."/>
            <person name="Krishnakumar V."/>
            <person name="Chan A.P."/>
            <person name="Thibaud-Nissen F."/>
            <person name="Schobel S."/>
            <person name="Town C.D."/>
        </authorList>
    </citation>
    <scope>GENOME REANNOTATION</scope>
    <source>
        <strain>cv. Columbia</strain>
    </source>
</reference>
<comment type="function">
    <text evidence="1">Ubiquitin-like protein which can be covalently attached to target lysines as a monomer. Does not seem to be involved in protein degradation and may function as an antagonist of ubiquitin in the degradation process (By similarity).</text>
</comment>
<comment type="subunit">
    <text evidence="1">Interacts with SAE2, SCE1, SIZ1 and MMS21 Covalently attached to a number of proteins.</text>
</comment>
<comment type="subcellular location">
    <subcellularLocation>
        <location evidence="1">Nucleus</location>
    </subcellularLocation>
    <subcellularLocation>
        <location evidence="1">Cytoplasm</location>
    </subcellularLocation>
</comment>
<comment type="miscellaneous">
    <text>Stress conditions rapidly and substantially elevates the amount of SUMO1 and SUMO2 conjugates with a concomitant reduction in the amount of free SUMO proteins. The SUMO conjugation system plays an important function in stress protection and/or repair.</text>
</comment>
<comment type="similarity">
    <text evidence="4">Belongs to the ubiquitin family. SUMO subfamily.</text>
</comment>